<organism>
    <name type="scientific">Halobacterium salinarum (strain ATCC 700922 / JCM 11081 / NRC-1)</name>
    <name type="common">Halobacterium halobium</name>
    <dbReference type="NCBI Taxonomy" id="64091"/>
    <lineage>
        <taxon>Archaea</taxon>
        <taxon>Methanobacteriati</taxon>
        <taxon>Methanobacteriota</taxon>
        <taxon>Stenosarchaea group</taxon>
        <taxon>Halobacteria</taxon>
        <taxon>Halobacteriales</taxon>
        <taxon>Halobacteriaceae</taxon>
        <taxon>Halobacterium</taxon>
        <taxon>Halobacterium salinarum NRC-34001</taxon>
    </lineage>
</organism>
<gene>
    <name evidence="1" type="primary">guaB</name>
    <name type="ordered locus">VNG_1001G</name>
</gene>
<reference key="1">
    <citation type="journal article" date="2000" name="Proc. Natl. Acad. Sci. U.S.A.">
        <title>Genome sequence of Halobacterium species NRC-1.</title>
        <authorList>
            <person name="Ng W.V."/>
            <person name="Kennedy S.P."/>
            <person name="Mahairas G.G."/>
            <person name="Berquist B."/>
            <person name="Pan M."/>
            <person name="Shukla H.D."/>
            <person name="Lasky S.R."/>
            <person name="Baliga N.S."/>
            <person name="Thorsson V."/>
            <person name="Sbrogna J."/>
            <person name="Swartzell S."/>
            <person name="Weir D."/>
            <person name="Hall J."/>
            <person name="Dahl T.A."/>
            <person name="Welti R."/>
            <person name="Goo Y.A."/>
            <person name="Leithauser B."/>
            <person name="Keller K."/>
            <person name="Cruz R."/>
            <person name="Danson M.J."/>
            <person name="Hough D.W."/>
            <person name="Maddocks D.G."/>
            <person name="Jablonski P.E."/>
            <person name="Krebs M.P."/>
            <person name="Angevine C.M."/>
            <person name="Dale H."/>
            <person name="Isenbarger T.A."/>
            <person name="Peck R.F."/>
            <person name="Pohlschroder M."/>
            <person name="Spudich J.L."/>
            <person name="Jung K.-H."/>
            <person name="Alam M."/>
            <person name="Freitas T."/>
            <person name="Hou S."/>
            <person name="Daniels C.J."/>
            <person name="Dennis P.P."/>
            <person name="Omer A.D."/>
            <person name="Ebhardt H."/>
            <person name="Lowe T.M."/>
            <person name="Liang P."/>
            <person name="Riley M."/>
            <person name="Hood L."/>
            <person name="DasSarma S."/>
        </authorList>
    </citation>
    <scope>NUCLEOTIDE SEQUENCE [LARGE SCALE GENOMIC DNA]</scope>
    <source>
        <strain>ATCC 700922 / JCM 11081 / NRC-1</strain>
    </source>
</reference>
<evidence type="ECO:0000255" key="1">
    <source>
        <dbReference type="HAMAP-Rule" id="MF_01964"/>
    </source>
</evidence>
<evidence type="ECO:0000256" key="2">
    <source>
        <dbReference type="SAM" id="MobiDB-lite"/>
    </source>
</evidence>
<evidence type="ECO:0000305" key="3"/>
<comment type="function">
    <text evidence="1">Catalyzes the conversion of inosine 5'-phosphate (IMP) to xanthosine 5'-phosphate (XMP), the first committed and rate-limiting step in the de novo synthesis of guanine nucleotides, and therefore plays an important role in the regulation of cell growth.</text>
</comment>
<comment type="catalytic activity">
    <reaction evidence="1">
        <text>IMP + NAD(+) + H2O = XMP + NADH + H(+)</text>
        <dbReference type="Rhea" id="RHEA:11708"/>
        <dbReference type="ChEBI" id="CHEBI:15377"/>
        <dbReference type="ChEBI" id="CHEBI:15378"/>
        <dbReference type="ChEBI" id="CHEBI:57464"/>
        <dbReference type="ChEBI" id="CHEBI:57540"/>
        <dbReference type="ChEBI" id="CHEBI:57945"/>
        <dbReference type="ChEBI" id="CHEBI:58053"/>
        <dbReference type="EC" id="1.1.1.205"/>
    </reaction>
</comment>
<comment type="cofactor">
    <cofactor evidence="1">
        <name>K(+)</name>
        <dbReference type="ChEBI" id="CHEBI:29103"/>
    </cofactor>
</comment>
<comment type="activity regulation">
    <text evidence="1">Mycophenolic acid (MPA) is a non-competitive inhibitor that prevents formation of the closed enzyme conformation by binding to the same site as the amobile flap. In contrast, mizoribine monophosphate (MZP) is a competitive inhibitor that induces the closed conformation. MPA is a potent inhibitor of mammalian IMPDHs but a poor inhibitor of the bacterial enzymes. MZP is a more potent inhibitor of bacterial IMPDH.</text>
</comment>
<comment type="pathway">
    <text evidence="1">Purine metabolism; XMP biosynthesis via de novo pathway; XMP from IMP: step 1/1.</text>
</comment>
<comment type="subunit">
    <text evidence="1">Homotetramer.</text>
</comment>
<comment type="similarity">
    <text evidence="1">Belongs to the IMPDH/GMPR family.</text>
</comment>
<comment type="sequence caution" evidence="3">
    <conflict type="erroneous initiation">
        <sequence resource="EMBL-CDS" id="AAG19418"/>
    </conflict>
    <text>Extended N-terminus.</text>
</comment>
<feature type="chain" id="PRO_0000415692" description="Inosine-5'-monophosphate dehydrogenase">
    <location>
        <begin position="1"/>
        <end position="499"/>
    </location>
</feature>
<feature type="domain" description="CBS 1" evidence="1">
    <location>
        <begin position="106"/>
        <end position="165"/>
    </location>
</feature>
<feature type="domain" description="CBS 2" evidence="1">
    <location>
        <begin position="169"/>
        <end position="225"/>
    </location>
</feature>
<feature type="region of interest" description="Disordered" evidence="2">
    <location>
        <begin position="480"/>
        <end position="499"/>
    </location>
</feature>
<feature type="active site" description="Thioimidate intermediate" evidence="1">
    <location>
        <position position="315"/>
    </location>
</feature>
<feature type="active site" description="Proton acceptor" evidence="1">
    <location>
        <position position="411"/>
    </location>
</feature>
<feature type="binding site" evidence="1">
    <location>
        <position position="260"/>
    </location>
    <ligand>
        <name>NAD(+)</name>
        <dbReference type="ChEBI" id="CHEBI:57540"/>
    </ligand>
</feature>
<feature type="binding site" evidence="1">
    <location>
        <begin position="308"/>
        <end position="310"/>
    </location>
    <ligand>
        <name>NAD(+)</name>
        <dbReference type="ChEBI" id="CHEBI:57540"/>
    </ligand>
</feature>
<feature type="binding site" description="in other chain" evidence="1">
    <location>
        <position position="310"/>
    </location>
    <ligand>
        <name>K(+)</name>
        <dbReference type="ChEBI" id="CHEBI:29103"/>
        <note>ligand shared between two tetrameric partners</note>
    </ligand>
</feature>
<feature type="binding site" description="in other chain" evidence="1">
    <location>
        <position position="312"/>
    </location>
    <ligand>
        <name>K(+)</name>
        <dbReference type="ChEBI" id="CHEBI:29103"/>
        <note>ligand shared between two tetrameric partners</note>
    </ligand>
</feature>
<feature type="binding site" evidence="1">
    <location>
        <position position="313"/>
    </location>
    <ligand>
        <name>IMP</name>
        <dbReference type="ChEBI" id="CHEBI:58053"/>
    </ligand>
</feature>
<feature type="binding site" description="in other chain" evidence="1">
    <location>
        <position position="315"/>
    </location>
    <ligand>
        <name>K(+)</name>
        <dbReference type="ChEBI" id="CHEBI:29103"/>
        <note>ligand shared between two tetrameric partners</note>
    </ligand>
</feature>
<feature type="binding site" evidence="1">
    <location>
        <begin position="348"/>
        <end position="350"/>
    </location>
    <ligand>
        <name>IMP</name>
        <dbReference type="ChEBI" id="CHEBI:58053"/>
    </ligand>
</feature>
<feature type="binding site" evidence="1">
    <location>
        <begin position="371"/>
        <end position="372"/>
    </location>
    <ligand>
        <name>IMP</name>
        <dbReference type="ChEBI" id="CHEBI:58053"/>
    </ligand>
</feature>
<feature type="binding site" evidence="1">
    <location>
        <begin position="395"/>
        <end position="399"/>
    </location>
    <ligand>
        <name>IMP</name>
        <dbReference type="ChEBI" id="CHEBI:58053"/>
    </ligand>
</feature>
<feature type="binding site" evidence="1">
    <location>
        <position position="425"/>
    </location>
    <ligand>
        <name>IMP</name>
        <dbReference type="ChEBI" id="CHEBI:58053"/>
    </ligand>
</feature>
<feature type="binding site" evidence="1">
    <location>
        <position position="479"/>
    </location>
    <ligand>
        <name>K(+)</name>
        <dbReference type="ChEBI" id="CHEBI:29103"/>
        <note>ligand shared between two tetrameric partners</note>
    </ligand>
</feature>
<feature type="binding site" evidence="1">
    <location>
        <position position="480"/>
    </location>
    <ligand>
        <name>K(+)</name>
        <dbReference type="ChEBI" id="CHEBI:29103"/>
        <note>ligand shared between two tetrameric partners</note>
    </ligand>
</feature>
<feature type="binding site" evidence="1">
    <location>
        <position position="481"/>
    </location>
    <ligand>
        <name>K(+)</name>
        <dbReference type="ChEBI" id="CHEBI:29103"/>
        <note>ligand shared between two tetrameric partners</note>
    </ligand>
</feature>
<name>IMDH_HALSA</name>
<keyword id="KW-0129">CBS domain</keyword>
<keyword id="KW-0332">GMP biosynthesis</keyword>
<keyword id="KW-0479">Metal-binding</keyword>
<keyword id="KW-0520">NAD</keyword>
<keyword id="KW-0560">Oxidoreductase</keyword>
<keyword id="KW-0630">Potassium</keyword>
<keyword id="KW-0658">Purine biosynthesis</keyword>
<keyword id="KW-1185">Reference proteome</keyword>
<keyword id="KW-0677">Repeat</keyword>
<dbReference type="EC" id="1.1.1.205" evidence="1"/>
<dbReference type="EMBL" id="AE004437">
    <property type="protein sequence ID" value="AAG19418.1"/>
    <property type="status" value="ALT_INIT"/>
    <property type="molecule type" value="Genomic_DNA"/>
</dbReference>
<dbReference type="PIR" id="F84256">
    <property type="entry name" value="F84256"/>
</dbReference>
<dbReference type="RefSeq" id="WP_012289261.1">
    <property type="nucleotide sequence ID" value="NC_002607.1"/>
</dbReference>
<dbReference type="SMR" id="Q9HQU4"/>
<dbReference type="FunCoup" id="Q9HQU4">
    <property type="interactions" value="121"/>
</dbReference>
<dbReference type="STRING" id="64091.VNG_1001G"/>
<dbReference type="PaxDb" id="64091-VNG_1001G"/>
<dbReference type="GeneID" id="89349385"/>
<dbReference type="KEGG" id="hal:VNG_1001G"/>
<dbReference type="PATRIC" id="fig|64091.14.peg.767"/>
<dbReference type="HOGENOM" id="CLU_022552_2_1_2"/>
<dbReference type="InParanoid" id="Q9HQU4"/>
<dbReference type="OrthoDB" id="21361at2157"/>
<dbReference type="PhylomeDB" id="Q9HQU4"/>
<dbReference type="UniPathway" id="UPA00601">
    <property type="reaction ID" value="UER00295"/>
</dbReference>
<dbReference type="Proteomes" id="UP000000554">
    <property type="component" value="Chromosome"/>
</dbReference>
<dbReference type="GO" id="GO:0003938">
    <property type="term" value="F:IMP dehydrogenase activity"/>
    <property type="evidence" value="ECO:0000318"/>
    <property type="project" value="GO_Central"/>
</dbReference>
<dbReference type="GO" id="GO:0046872">
    <property type="term" value="F:metal ion binding"/>
    <property type="evidence" value="ECO:0007669"/>
    <property type="project" value="UniProtKB-UniRule"/>
</dbReference>
<dbReference type="GO" id="GO:0000166">
    <property type="term" value="F:nucleotide binding"/>
    <property type="evidence" value="ECO:0007669"/>
    <property type="project" value="UniProtKB-UniRule"/>
</dbReference>
<dbReference type="GO" id="GO:0006177">
    <property type="term" value="P:GMP biosynthetic process"/>
    <property type="evidence" value="ECO:0007669"/>
    <property type="project" value="UniProtKB-UniRule"/>
</dbReference>
<dbReference type="GO" id="GO:0006183">
    <property type="term" value="P:GTP biosynthetic process"/>
    <property type="evidence" value="ECO:0000318"/>
    <property type="project" value="GO_Central"/>
</dbReference>
<dbReference type="CDD" id="cd04601">
    <property type="entry name" value="CBS_pair_IMPDH"/>
    <property type="match status" value="1"/>
</dbReference>
<dbReference type="CDD" id="cd00381">
    <property type="entry name" value="IMPDH"/>
    <property type="match status" value="1"/>
</dbReference>
<dbReference type="FunFam" id="3.20.20.70:FF:000003">
    <property type="entry name" value="GMP reductase"/>
    <property type="match status" value="1"/>
</dbReference>
<dbReference type="Gene3D" id="3.20.20.70">
    <property type="entry name" value="Aldolase class I"/>
    <property type="match status" value="1"/>
</dbReference>
<dbReference type="HAMAP" id="MF_01964">
    <property type="entry name" value="IMPDH"/>
    <property type="match status" value="1"/>
</dbReference>
<dbReference type="InterPro" id="IPR013785">
    <property type="entry name" value="Aldolase_TIM"/>
</dbReference>
<dbReference type="InterPro" id="IPR000644">
    <property type="entry name" value="CBS_dom"/>
</dbReference>
<dbReference type="InterPro" id="IPR046342">
    <property type="entry name" value="CBS_dom_sf"/>
</dbReference>
<dbReference type="InterPro" id="IPR005990">
    <property type="entry name" value="IMP_DH"/>
</dbReference>
<dbReference type="InterPro" id="IPR015875">
    <property type="entry name" value="IMP_DH/GMP_Rdtase_CS"/>
</dbReference>
<dbReference type="InterPro" id="IPR001093">
    <property type="entry name" value="IMP_DH_GMPRt"/>
</dbReference>
<dbReference type="NCBIfam" id="TIGR01302">
    <property type="entry name" value="IMP_dehydrog"/>
    <property type="match status" value="1"/>
</dbReference>
<dbReference type="PANTHER" id="PTHR11911:SF111">
    <property type="entry name" value="INOSINE-5'-MONOPHOSPHATE DEHYDROGENASE"/>
    <property type="match status" value="1"/>
</dbReference>
<dbReference type="PANTHER" id="PTHR11911">
    <property type="entry name" value="INOSINE-5-MONOPHOSPHATE DEHYDROGENASE RELATED"/>
    <property type="match status" value="1"/>
</dbReference>
<dbReference type="Pfam" id="PF00571">
    <property type="entry name" value="CBS"/>
    <property type="match status" value="2"/>
</dbReference>
<dbReference type="Pfam" id="PF00478">
    <property type="entry name" value="IMPDH"/>
    <property type="match status" value="1"/>
</dbReference>
<dbReference type="PIRSF" id="PIRSF000130">
    <property type="entry name" value="IMPDH"/>
    <property type="match status" value="1"/>
</dbReference>
<dbReference type="SMART" id="SM00116">
    <property type="entry name" value="CBS"/>
    <property type="match status" value="2"/>
</dbReference>
<dbReference type="SMART" id="SM01240">
    <property type="entry name" value="IMPDH"/>
    <property type="match status" value="1"/>
</dbReference>
<dbReference type="SUPFAM" id="SSF54631">
    <property type="entry name" value="CBS-domain pair"/>
    <property type="match status" value="1"/>
</dbReference>
<dbReference type="SUPFAM" id="SSF51412">
    <property type="entry name" value="Inosine monophosphate dehydrogenase (IMPDH)"/>
    <property type="match status" value="1"/>
</dbReference>
<dbReference type="PROSITE" id="PS51371">
    <property type="entry name" value="CBS"/>
    <property type="match status" value="2"/>
</dbReference>
<dbReference type="PROSITE" id="PS00487">
    <property type="entry name" value="IMP_DH_GMP_RED"/>
    <property type="match status" value="1"/>
</dbReference>
<sequence>MANDSSTDGRFSEKLRVPEALTFDDVLLRPAESRVEPDDADVATRVSTNVELEVPVLSAAMDTVTESRLAIAMAREGGLGVLHQNMDTDRVVAEVERVKRADELVIDRENVVTAAPEQTVEAVDEMMDRSDVSGAPVVDDDDTVRGIISATDIRPYLEVGESDAVREAMTDEVITAPEDITARDALELMYEHKIERVPIVNDEQHLVGLVTMQGILERREHGSAARDQNGRLRVGVAVGPFDTERATAVDEAGADVLFIDCAHAHNLNVIDSAREIKASVDADVVVGNVGTREAAEAVVDFADGIKVGIGPGSICTTRVVTGSGMPQITAVSQVADVAAPAGVPVIADGGIRYSGDAAKAIAAGADAVMLGSYFAGTDEAPGRVITMNGKKYKQYRGMGSVGAMQSGGSDRYLKDDDEDEEYVPEGVEAATPYKGSLASELHQLVGGIQSGMGYVGAESIPAFKADAEFVRVSAAGQTEGHPHDVMITDEAPNYSPQGE</sequence>
<protein>
    <recommendedName>
        <fullName evidence="1">Inosine-5'-monophosphate dehydrogenase</fullName>
        <shortName evidence="1">IMP dehydrogenase</shortName>
        <shortName evidence="1">IMPD</shortName>
        <shortName evidence="1">IMPDH</shortName>
        <ecNumber evidence="1">1.1.1.205</ecNumber>
    </recommendedName>
</protein>
<proteinExistence type="inferred from homology"/>
<accession>Q9HQU4</accession>